<reference key="1">
    <citation type="journal article" date="1994" name="J. Bacteriol.">
        <title>Molecular characterization of cap3A, a gene from the operon required for the synthesis of the capsule of Streptococcus pneumoniae type 3: sequencing of mutations responsible for the unencapsulated phenotype and localization of the capsular cluster on the pneumococcal chromosome.</title>
        <authorList>
            <person name="Arrecubieta C."/>
            <person name="Lopez R."/>
            <person name="Garcia E."/>
        </authorList>
    </citation>
    <scope>NUCLEOTIDE SEQUENCE [GENOMIC DNA]</scope>
    <source>
        <strain>406 / Type 3</strain>
    </source>
</reference>
<reference key="2">
    <citation type="journal article" date="1995" name="Gene">
        <title>Sequence and transcriptional analysis of a DNA region involved in the production of capsular polysaccharide in Streptococcus pneumoniae type 3.</title>
        <authorList>
            <person name="Arrecubieta C."/>
            <person name="Garcia E."/>
            <person name="Lopez R."/>
        </authorList>
    </citation>
    <scope>NUCLEOTIDE SEQUENCE [GENOMIC DNA]</scope>
    <source>
        <strain>406 / Type 3</strain>
    </source>
</reference>
<reference key="3">
    <citation type="submission" date="1996-09" db="EMBL/GenBank/DDBJ databases">
        <authorList>
            <person name="Garcia E."/>
            <person name="Arrecubieta C."/>
            <person name="Munoz R."/>
            <person name="Mollerach M."/>
            <person name="Lopez R."/>
        </authorList>
    </citation>
    <scope>SEQUENCE REVISION TO 129 AND 228</scope>
</reference>
<reference key="4">
    <citation type="journal article" date="1995" name="J. Exp. Med.">
        <title>Characterization of the cassette containing genes for type 3 capsular polysaccharide biosynthesis in Streptococcus pneumoniae.</title>
        <authorList>
            <person name="Dillard J.P."/>
            <person name="Vandersea M.W."/>
            <person name="Yother J."/>
        </authorList>
    </citation>
    <scope>NUCLEOTIDE SEQUENCE [GENOMIC DNA]</scope>
    <source>
        <strain>WU2 / Serotype 3</strain>
    </source>
</reference>
<sequence>MKIAIAGSGYVGLSLAVLLAQHHEVKVIDVIKDKVESINNRKSPIKDEAIEKYLVEKELNLEASLDPAHVYKDVEYAIIATPTNYDVDLNQFDTSSVEAAIKTCMEYNDTCTIVIKSTIPEGYTKEVREKFNTDRIIFSPEFLRESKALYDNLYPSRIVVGTDLDDSELTKRAWQFADLLKGGAIKEEVPILVVAFNEAEVAKLFSNTYLATRVRYFNEIDTYSEVKGLNPKTIIDIVCYDPRIGSYYNNPSFGYGGYCLPKDTKQLKASFRDVPENLITAVVQSNKTRKDYIAGAILAKQPSVVGIYRLIMKSDSDNFRSSAVKGVMERLDNYGKEIVIYEPTIECDTFMGYRVIKSLDEFKNISDIVVANRMNDDLRDIQEKLYTRDLFGRE</sequence>
<comment type="function">
    <text>Catalyzes the formation of UDP-glucuronic acid which is required for capsular hyaluronic acid synthesis. Directly responsible for the transformation of some unencapsulated serotype-3 SP mutants to the encapsulated phenotype.</text>
</comment>
<comment type="catalytic activity">
    <reaction>
        <text>UDP-alpha-D-glucose + 2 NAD(+) + H2O = UDP-alpha-D-glucuronate + 2 NADH + 3 H(+)</text>
        <dbReference type="Rhea" id="RHEA:23596"/>
        <dbReference type="ChEBI" id="CHEBI:15377"/>
        <dbReference type="ChEBI" id="CHEBI:15378"/>
        <dbReference type="ChEBI" id="CHEBI:57540"/>
        <dbReference type="ChEBI" id="CHEBI:57945"/>
        <dbReference type="ChEBI" id="CHEBI:58052"/>
        <dbReference type="ChEBI" id="CHEBI:58885"/>
        <dbReference type="EC" id="1.1.1.22"/>
    </reaction>
</comment>
<comment type="pathway">
    <text>Nucleotide-sugar biosynthesis; UDP-alpha-D-glucuronate biosynthesis; UDP-alpha-D-glucuronate from UDP-alpha-D-glucose: step 1/1.</text>
</comment>
<comment type="similarity">
    <text evidence="3">Belongs to the UDP-glucose/GDP-mannose dehydrogenase family.</text>
</comment>
<organism>
    <name type="scientific">Streptococcus pneumoniae</name>
    <dbReference type="NCBI Taxonomy" id="1313"/>
    <lineage>
        <taxon>Bacteria</taxon>
        <taxon>Bacillati</taxon>
        <taxon>Bacillota</taxon>
        <taxon>Bacilli</taxon>
        <taxon>Lactobacillales</taxon>
        <taxon>Streptococcaceae</taxon>
        <taxon>Streptococcus</taxon>
    </lineage>
</organism>
<keyword id="KW-0972">Capsule biogenesis/degradation</keyword>
<keyword id="KW-0520">NAD</keyword>
<keyword id="KW-0560">Oxidoreductase</keyword>
<dbReference type="EC" id="1.1.1.22"/>
<dbReference type="EMBL" id="Z47210">
    <property type="protein sequence ID" value="CAA87403.1"/>
    <property type="molecule type" value="Genomic_DNA"/>
</dbReference>
<dbReference type="EMBL" id="Z12159">
    <property type="protein sequence ID" value="CAA78147.1"/>
    <property type="molecule type" value="Genomic_DNA"/>
</dbReference>
<dbReference type="EMBL" id="U15171">
    <property type="protein sequence ID" value="AAC43311.1"/>
    <property type="molecule type" value="Genomic_DNA"/>
</dbReference>
<dbReference type="SMR" id="Q57346"/>
<dbReference type="BioCyc" id="MetaCyc:MONOMER-18145"/>
<dbReference type="UniPathway" id="UPA00038">
    <property type="reaction ID" value="UER00491"/>
</dbReference>
<dbReference type="GO" id="GO:0051287">
    <property type="term" value="F:NAD binding"/>
    <property type="evidence" value="ECO:0000250"/>
    <property type="project" value="UniProtKB"/>
</dbReference>
<dbReference type="GO" id="GO:0003979">
    <property type="term" value="F:UDP-glucose 6-dehydrogenase activity"/>
    <property type="evidence" value="ECO:0000250"/>
    <property type="project" value="UniProtKB"/>
</dbReference>
<dbReference type="GO" id="GO:0000271">
    <property type="term" value="P:polysaccharide biosynthetic process"/>
    <property type="evidence" value="ECO:0007669"/>
    <property type="project" value="InterPro"/>
</dbReference>
<dbReference type="GO" id="GO:0006065">
    <property type="term" value="P:UDP-glucuronate biosynthetic process"/>
    <property type="evidence" value="ECO:0007669"/>
    <property type="project" value="UniProtKB-UniPathway"/>
</dbReference>
<dbReference type="Gene3D" id="1.10.1040.10">
    <property type="entry name" value="N-(1-d-carboxylethyl)-l-norvaline Dehydrogenase, domain 2"/>
    <property type="match status" value="1"/>
</dbReference>
<dbReference type="Gene3D" id="3.40.50.720">
    <property type="entry name" value="NAD(P)-binding Rossmann-like Domain"/>
    <property type="match status" value="2"/>
</dbReference>
<dbReference type="InterPro" id="IPR008927">
    <property type="entry name" value="6-PGluconate_DH-like_C_sf"/>
</dbReference>
<dbReference type="InterPro" id="IPR013328">
    <property type="entry name" value="6PGD_dom2"/>
</dbReference>
<dbReference type="InterPro" id="IPR036291">
    <property type="entry name" value="NAD(P)-bd_dom_sf"/>
</dbReference>
<dbReference type="InterPro" id="IPR017476">
    <property type="entry name" value="UDP-Glc/GDP-Man"/>
</dbReference>
<dbReference type="InterPro" id="IPR014027">
    <property type="entry name" value="UDP-Glc/GDP-Man_DH_C"/>
</dbReference>
<dbReference type="InterPro" id="IPR036220">
    <property type="entry name" value="UDP-Glc/GDP-Man_DH_C_sf"/>
</dbReference>
<dbReference type="InterPro" id="IPR014026">
    <property type="entry name" value="UDP-Glc/GDP-Man_DH_dimer"/>
</dbReference>
<dbReference type="InterPro" id="IPR001732">
    <property type="entry name" value="UDP-Glc/GDP-Man_DH_N"/>
</dbReference>
<dbReference type="InterPro" id="IPR028357">
    <property type="entry name" value="UDPglc_DH_bac"/>
</dbReference>
<dbReference type="NCBIfam" id="TIGR03026">
    <property type="entry name" value="NDP-sugDHase"/>
    <property type="match status" value="1"/>
</dbReference>
<dbReference type="PANTHER" id="PTHR43750:SF2">
    <property type="entry name" value="UDP-GLUCOSE 6-DEHYDROGENASE"/>
    <property type="match status" value="1"/>
</dbReference>
<dbReference type="PANTHER" id="PTHR43750">
    <property type="entry name" value="UDP-GLUCOSE 6-DEHYDROGENASE TUAD"/>
    <property type="match status" value="1"/>
</dbReference>
<dbReference type="Pfam" id="PF00984">
    <property type="entry name" value="UDPG_MGDP_dh"/>
    <property type="match status" value="1"/>
</dbReference>
<dbReference type="Pfam" id="PF03720">
    <property type="entry name" value="UDPG_MGDP_dh_C"/>
    <property type="match status" value="1"/>
</dbReference>
<dbReference type="Pfam" id="PF03721">
    <property type="entry name" value="UDPG_MGDP_dh_N"/>
    <property type="match status" value="1"/>
</dbReference>
<dbReference type="PIRSF" id="PIRSF500134">
    <property type="entry name" value="UDPglc_DH_bac"/>
    <property type="match status" value="1"/>
</dbReference>
<dbReference type="PIRSF" id="PIRSF000124">
    <property type="entry name" value="UDPglc_GDPman_dh"/>
    <property type="match status" value="1"/>
</dbReference>
<dbReference type="SMART" id="SM00984">
    <property type="entry name" value="UDPG_MGDP_dh_C"/>
    <property type="match status" value="1"/>
</dbReference>
<dbReference type="SUPFAM" id="SSF48179">
    <property type="entry name" value="6-phosphogluconate dehydrogenase C-terminal domain-like"/>
    <property type="match status" value="1"/>
</dbReference>
<dbReference type="SUPFAM" id="SSF51735">
    <property type="entry name" value="NAD(P)-binding Rossmann-fold domains"/>
    <property type="match status" value="1"/>
</dbReference>
<dbReference type="SUPFAM" id="SSF52413">
    <property type="entry name" value="UDP-glucose/GDP-mannose dehydrogenase C-terminal domain"/>
    <property type="match status" value="1"/>
</dbReference>
<feature type="chain" id="PRO_0000074053" description="UDP-glucose 6-dehydrogenase">
    <location>
        <begin position="1"/>
        <end position="394"/>
    </location>
</feature>
<feature type="active site" description="Nucleophile" evidence="1">
    <location>
        <position position="259"/>
    </location>
</feature>
<feature type="binding site" evidence="2">
    <location>
        <begin position="2"/>
        <end position="19"/>
    </location>
    <ligand>
        <name>NAD(+)</name>
        <dbReference type="ChEBI" id="CHEBI:57540"/>
    </ligand>
</feature>
<feature type="binding site" evidence="1">
    <location>
        <position position="11"/>
    </location>
    <ligand>
        <name>NAD(+)</name>
        <dbReference type="ChEBI" id="CHEBI:57540"/>
    </ligand>
</feature>
<feature type="binding site" evidence="1">
    <location>
        <position position="29"/>
    </location>
    <ligand>
        <name>NAD(+)</name>
        <dbReference type="ChEBI" id="CHEBI:57540"/>
    </ligand>
</feature>
<feature type="binding site" evidence="1">
    <location>
        <position position="34"/>
    </location>
    <ligand>
        <name>NAD(+)</name>
        <dbReference type="ChEBI" id="CHEBI:57540"/>
    </ligand>
</feature>
<feature type="binding site" evidence="1">
    <location>
        <position position="83"/>
    </location>
    <ligand>
        <name>NAD(+)</name>
        <dbReference type="ChEBI" id="CHEBI:57540"/>
    </ligand>
</feature>
<feature type="binding site" evidence="1">
    <location>
        <position position="118"/>
    </location>
    <ligand>
        <name>NAD(+)</name>
        <dbReference type="ChEBI" id="CHEBI:57540"/>
    </ligand>
</feature>
<feature type="binding site" evidence="1">
    <location>
        <begin position="141"/>
        <end position="145"/>
    </location>
    <ligand>
        <name>substrate</name>
    </ligand>
</feature>
<feature type="binding site" evidence="1">
    <location>
        <position position="145"/>
    </location>
    <ligand>
        <name>NAD(+)</name>
        <dbReference type="ChEBI" id="CHEBI:57540"/>
    </ligand>
</feature>
<feature type="binding site" evidence="1">
    <location>
        <position position="203"/>
    </location>
    <ligand>
        <name>substrate</name>
    </ligand>
</feature>
<feature type="binding site" evidence="1">
    <location>
        <position position="207"/>
    </location>
    <ligand>
        <name>substrate</name>
    </ligand>
</feature>
<feature type="binding site" evidence="1">
    <location>
        <begin position="248"/>
        <end position="252"/>
    </location>
    <ligand>
        <name>substrate</name>
    </ligand>
</feature>
<feature type="binding site" evidence="1">
    <location>
        <position position="256"/>
    </location>
    <ligand>
        <name>substrate</name>
    </ligand>
</feature>
<feature type="binding site" evidence="1">
    <location>
        <position position="258"/>
    </location>
    <ligand>
        <name>NAD(+)</name>
        <dbReference type="ChEBI" id="CHEBI:57540"/>
    </ligand>
</feature>
<feature type="binding site" evidence="1">
    <location>
        <position position="262"/>
    </location>
    <ligand>
        <name>NAD(+)</name>
        <dbReference type="ChEBI" id="CHEBI:57540"/>
    </ligand>
</feature>
<feature type="binding site" evidence="1">
    <location>
        <position position="313"/>
    </location>
    <ligand>
        <name>substrate</name>
    </ligand>
</feature>
<feature type="binding site" evidence="1">
    <location>
        <position position="320"/>
    </location>
    <ligand>
        <name>NAD(+)</name>
        <dbReference type="ChEBI" id="CHEBI:57540"/>
    </ligand>
</feature>
<feature type="sequence conflict" description="In Ref. 4; AAC43311." evidence="3" ref="4">
    <original>R</original>
    <variation>A</variation>
    <location>
        <position position="215"/>
    </location>
</feature>
<feature type="sequence conflict" description="In Ref. 4; AAC43311." evidence="3" ref="4">
    <original>Y</original>
    <variation>D</variation>
    <location>
        <position position="247"/>
    </location>
</feature>
<protein>
    <recommendedName>
        <fullName>UDP-glucose 6-dehydrogenase</fullName>
        <shortName>UDP-Glc dehydrogenase</shortName>
        <shortName>UDP-GlcDH</shortName>
        <shortName>UDPGDH</shortName>
        <ecNumber>1.1.1.22</ecNumber>
    </recommendedName>
</protein>
<proteinExistence type="inferred from homology"/>
<name>UDG_STREE</name>
<gene>
    <name type="primary">cap3A</name>
    <name type="synonym">cps3D</name>
</gene>
<evidence type="ECO:0000250" key="1">
    <source>
        <dbReference type="UniProtKB" id="Q0P8H3"/>
    </source>
</evidence>
<evidence type="ECO:0000255" key="2"/>
<evidence type="ECO:0000305" key="3"/>
<accession>Q57346</accession>
<accession>P72519</accession>
<accession>Q54610</accession>